<accession>Q2YB22</accession>
<name>SYV_NITMU</name>
<proteinExistence type="inferred from homology"/>
<dbReference type="EC" id="6.1.1.9" evidence="1"/>
<dbReference type="EMBL" id="CP000103">
    <property type="protein sequence ID" value="ABB74049.1"/>
    <property type="molecule type" value="Genomic_DNA"/>
</dbReference>
<dbReference type="RefSeq" id="WP_011380099.1">
    <property type="nucleotide sequence ID" value="NC_007614.1"/>
</dbReference>
<dbReference type="SMR" id="Q2YB22"/>
<dbReference type="STRING" id="323848.Nmul_A0742"/>
<dbReference type="KEGG" id="nmu:Nmul_A0742"/>
<dbReference type="eggNOG" id="COG0525">
    <property type="taxonomic scope" value="Bacteria"/>
</dbReference>
<dbReference type="HOGENOM" id="CLU_001493_0_2_4"/>
<dbReference type="OrthoDB" id="9810365at2"/>
<dbReference type="Proteomes" id="UP000002718">
    <property type="component" value="Chromosome"/>
</dbReference>
<dbReference type="GO" id="GO:0005829">
    <property type="term" value="C:cytosol"/>
    <property type="evidence" value="ECO:0007669"/>
    <property type="project" value="TreeGrafter"/>
</dbReference>
<dbReference type="GO" id="GO:0002161">
    <property type="term" value="F:aminoacyl-tRNA deacylase activity"/>
    <property type="evidence" value="ECO:0007669"/>
    <property type="project" value="InterPro"/>
</dbReference>
<dbReference type="GO" id="GO:0005524">
    <property type="term" value="F:ATP binding"/>
    <property type="evidence" value="ECO:0007669"/>
    <property type="project" value="UniProtKB-UniRule"/>
</dbReference>
<dbReference type="GO" id="GO:0004832">
    <property type="term" value="F:valine-tRNA ligase activity"/>
    <property type="evidence" value="ECO:0007669"/>
    <property type="project" value="UniProtKB-UniRule"/>
</dbReference>
<dbReference type="GO" id="GO:0006438">
    <property type="term" value="P:valyl-tRNA aminoacylation"/>
    <property type="evidence" value="ECO:0007669"/>
    <property type="project" value="UniProtKB-UniRule"/>
</dbReference>
<dbReference type="CDD" id="cd07962">
    <property type="entry name" value="Anticodon_Ia_Val"/>
    <property type="match status" value="1"/>
</dbReference>
<dbReference type="CDD" id="cd00817">
    <property type="entry name" value="ValRS_core"/>
    <property type="match status" value="1"/>
</dbReference>
<dbReference type="FunFam" id="1.10.287.380:FF:000001">
    <property type="entry name" value="Valine--tRNA ligase"/>
    <property type="match status" value="1"/>
</dbReference>
<dbReference type="FunFam" id="3.40.50.620:FF:000032">
    <property type="entry name" value="Valine--tRNA ligase"/>
    <property type="match status" value="1"/>
</dbReference>
<dbReference type="FunFam" id="1.10.730.10:FF:000009">
    <property type="entry name" value="Valine--tRNA ligase, mitochondrial"/>
    <property type="match status" value="1"/>
</dbReference>
<dbReference type="FunFam" id="3.40.50.620:FF:000078">
    <property type="entry name" value="Valine--tRNA ligase, mitochondrial"/>
    <property type="match status" value="1"/>
</dbReference>
<dbReference type="Gene3D" id="3.40.50.620">
    <property type="entry name" value="HUPs"/>
    <property type="match status" value="2"/>
</dbReference>
<dbReference type="Gene3D" id="1.10.730.10">
    <property type="entry name" value="Isoleucyl-tRNA Synthetase, Domain 1"/>
    <property type="match status" value="1"/>
</dbReference>
<dbReference type="Gene3D" id="1.10.287.380">
    <property type="entry name" value="Valyl-tRNA synthetase, C-terminal domain"/>
    <property type="match status" value="1"/>
</dbReference>
<dbReference type="Gene3D" id="3.90.740.10">
    <property type="entry name" value="Valyl/Leucyl/Isoleucyl-tRNA synthetase, editing domain"/>
    <property type="match status" value="2"/>
</dbReference>
<dbReference type="HAMAP" id="MF_02004">
    <property type="entry name" value="Val_tRNA_synth_type1"/>
    <property type="match status" value="1"/>
</dbReference>
<dbReference type="InterPro" id="IPR001412">
    <property type="entry name" value="aa-tRNA-synth_I_CS"/>
</dbReference>
<dbReference type="InterPro" id="IPR002300">
    <property type="entry name" value="aa-tRNA-synth_Ia"/>
</dbReference>
<dbReference type="InterPro" id="IPR033705">
    <property type="entry name" value="Anticodon_Ia_Val"/>
</dbReference>
<dbReference type="InterPro" id="IPR013155">
    <property type="entry name" value="M/V/L/I-tRNA-synth_anticd-bd"/>
</dbReference>
<dbReference type="InterPro" id="IPR014729">
    <property type="entry name" value="Rossmann-like_a/b/a_fold"/>
</dbReference>
<dbReference type="InterPro" id="IPR010978">
    <property type="entry name" value="tRNA-bd_arm"/>
</dbReference>
<dbReference type="InterPro" id="IPR009080">
    <property type="entry name" value="tRNAsynth_Ia_anticodon-bd"/>
</dbReference>
<dbReference type="InterPro" id="IPR037118">
    <property type="entry name" value="Val-tRNA_synth_C_sf"/>
</dbReference>
<dbReference type="InterPro" id="IPR019499">
    <property type="entry name" value="Val-tRNA_synth_tRNA-bd"/>
</dbReference>
<dbReference type="InterPro" id="IPR009008">
    <property type="entry name" value="Val/Leu/Ile-tRNA-synth_edit"/>
</dbReference>
<dbReference type="InterPro" id="IPR002303">
    <property type="entry name" value="Valyl-tRNA_ligase"/>
</dbReference>
<dbReference type="NCBIfam" id="NF004349">
    <property type="entry name" value="PRK05729.1"/>
    <property type="match status" value="1"/>
</dbReference>
<dbReference type="NCBIfam" id="TIGR00422">
    <property type="entry name" value="valS"/>
    <property type="match status" value="1"/>
</dbReference>
<dbReference type="PANTHER" id="PTHR11946:SF93">
    <property type="entry name" value="VALINE--TRNA LIGASE, CHLOROPLASTIC_MITOCHONDRIAL 2"/>
    <property type="match status" value="1"/>
</dbReference>
<dbReference type="PANTHER" id="PTHR11946">
    <property type="entry name" value="VALYL-TRNA SYNTHETASES"/>
    <property type="match status" value="1"/>
</dbReference>
<dbReference type="Pfam" id="PF08264">
    <property type="entry name" value="Anticodon_1"/>
    <property type="match status" value="1"/>
</dbReference>
<dbReference type="Pfam" id="PF00133">
    <property type="entry name" value="tRNA-synt_1"/>
    <property type="match status" value="1"/>
</dbReference>
<dbReference type="Pfam" id="PF10458">
    <property type="entry name" value="Val_tRNA-synt_C"/>
    <property type="match status" value="1"/>
</dbReference>
<dbReference type="PRINTS" id="PR00986">
    <property type="entry name" value="TRNASYNTHVAL"/>
</dbReference>
<dbReference type="SUPFAM" id="SSF47323">
    <property type="entry name" value="Anticodon-binding domain of a subclass of class I aminoacyl-tRNA synthetases"/>
    <property type="match status" value="1"/>
</dbReference>
<dbReference type="SUPFAM" id="SSF52374">
    <property type="entry name" value="Nucleotidylyl transferase"/>
    <property type="match status" value="1"/>
</dbReference>
<dbReference type="SUPFAM" id="SSF46589">
    <property type="entry name" value="tRNA-binding arm"/>
    <property type="match status" value="1"/>
</dbReference>
<dbReference type="SUPFAM" id="SSF50677">
    <property type="entry name" value="ValRS/IleRS/LeuRS editing domain"/>
    <property type="match status" value="1"/>
</dbReference>
<dbReference type="PROSITE" id="PS00178">
    <property type="entry name" value="AA_TRNA_LIGASE_I"/>
    <property type="match status" value="1"/>
</dbReference>
<protein>
    <recommendedName>
        <fullName evidence="1">Valine--tRNA ligase</fullName>
        <ecNumber evidence="1">6.1.1.9</ecNumber>
    </recommendedName>
    <alternativeName>
        <fullName evidence="1">Valyl-tRNA synthetase</fullName>
        <shortName evidence="1">ValRS</shortName>
    </alternativeName>
</protein>
<gene>
    <name evidence="1" type="primary">valS</name>
    <name type="ordered locus">Nmul_A0742</name>
</gene>
<feature type="chain" id="PRO_1000022169" description="Valine--tRNA ligase">
    <location>
        <begin position="1"/>
        <end position="926"/>
    </location>
</feature>
<feature type="coiled-coil region" evidence="1">
    <location>
        <begin position="859"/>
        <end position="924"/>
    </location>
</feature>
<feature type="short sequence motif" description="'HIGH' region">
    <location>
        <begin position="48"/>
        <end position="58"/>
    </location>
</feature>
<feature type="short sequence motif" description="'KMSKS' region">
    <location>
        <begin position="536"/>
        <end position="540"/>
    </location>
</feature>
<feature type="binding site" evidence="1">
    <location>
        <position position="539"/>
    </location>
    <ligand>
        <name>ATP</name>
        <dbReference type="ChEBI" id="CHEBI:30616"/>
    </ligand>
</feature>
<comment type="function">
    <text evidence="1">Catalyzes the attachment of valine to tRNA(Val). As ValRS can inadvertently accommodate and process structurally similar amino acids such as threonine, to avoid such errors, it has a 'posttransfer' editing activity that hydrolyzes mischarged Thr-tRNA(Val) in a tRNA-dependent manner.</text>
</comment>
<comment type="catalytic activity">
    <reaction evidence="1">
        <text>tRNA(Val) + L-valine + ATP = L-valyl-tRNA(Val) + AMP + diphosphate</text>
        <dbReference type="Rhea" id="RHEA:10704"/>
        <dbReference type="Rhea" id="RHEA-COMP:9672"/>
        <dbReference type="Rhea" id="RHEA-COMP:9708"/>
        <dbReference type="ChEBI" id="CHEBI:30616"/>
        <dbReference type="ChEBI" id="CHEBI:33019"/>
        <dbReference type="ChEBI" id="CHEBI:57762"/>
        <dbReference type="ChEBI" id="CHEBI:78442"/>
        <dbReference type="ChEBI" id="CHEBI:78537"/>
        <dbReference type="ChEBI" id="CHEBI:456215"/>
        <dbReference type="EC" id="6.1.1.9"/>
    </reaction>
</comment>
<comment type="subunit">
    <text evidence="1">Monomer.</text>
</comment>
<comment type="subcellular location">
    <subcellularLocation>
        <location evidence="1">Cytoplasm</location>
    </subcellularLocation>
</comment>
<comment type="domain">
    <text evidence="1">ValRS has two distinct active sites: one for aminoacylation and one for editing. The misactivated threonine is translocated from the active site to the editing site.</text>
</comment>
<comment type="domain">
    <text evidence="1">The C-terminal coiled-coil domain is crucial for aminoacylation activity.</text>
</comment>
<comment type="similarity">
    <text evidence="1">Belongs to the class-I aminoacyl-tRNA synthetase family. ValS type 1 subfamily.</text>
</comment>
<sequence>MELEKSFDPRAIESRWYSRWEGEGYFRPGPAGTAGDQAPAYCIMLPPPNVTGTLHMGHAFQHTLMDALTRYHRMRGDNTLWQPGTDHAGIATQIVVERQLDQQSIDRRDLGREAFLARVWEWKEESGSTISRQMRRMGASCDWSRERFTMDGGLSRAVTEVFVRLYREGLIYRGERLVNWDPVLQTAVSDLEVVSAEEEGSLWHILYPFENDLGGNQDGAKPEGLIVATTRPETMLGDMAVAVHPDDERYRHLIGRHVRLPLCERSIPIIADAYVDPAFGTGCVKITPAHDFNDYQIGQRHKLVPLGILTLDGKINDLAPAEYQGLDRFAARRKIVADLEEQNLLVETKPHKLMVPRGDRTQAIVEPMLTDQWYVTMNGLARRGLEAVASGEVKFIPENWAHVYNQWLENIQDWCISRQLWWGHRIPAWYDEDNNIFVAHNLEEAQRLAGGRKLVQDEDVLDTWFSSALWPFSTLGWPEKTPELDTFLPTSVLVTGFDIIFFWVARMVMMSLHFTGKVPFREVYITGLIRDAEGHKMSKSRGNVLDPLDLIDGIALPDLITKRTSGLMNPRQAESIEKITRKQFPEGIPAFGADALRFTFASLASHGRDIKFDMQRCEGYRNFCNKLWNAARYVLMNCEGKDTGLVESVPLEYSDADCWIIGRLQQAETAVAQAYQDYRFDMAAREIYEFVWDEYCDWYLEFAKVQLNSGNEVVQRTTRRTLARVLETALRLAHPLIPFITEELWQSVAPLAAKQGVSIMLQPYPQADPSKLDDTAIGNIAALKEMINACRTLRGEMNLSPASRVPLLAVGDVKTLAGFSPYLKALAKLSDIEIEQDLPPAEAPVAIVGEFRLMLKIEIDIAAERERLTKELDRVQTEMEKAQTKLANSNFVDRAPAKVVEQEKERLAGFSTTLGKLKEQLQKLGC</sequence>
<keyword id="KW-0030">Aminoacyl-tRNA synthetase</keyword>
<keyword id="KW-0067">ATP-binding</keyword>
<keyword id="KW-0175">Coiled coil</keyword>
<keyword id="KW-0963">Cytoplasm</keyword>
<keyword id="KW-0436">Ligase</keyword>
<keyword id="KW-0547">Nucleotide-binding</keyword>
<keyword id="KW-0648">Protein biosynthesis</keyword>
<keyword id="KW-1185">Reference proteome</keyword>
<organism>
    <name type="scientific">Nitrosospira multiformis (strain ATCC 25196 / NCIMB 11849 / C 71)</name>
    <dbReference type="NCBI Taxonomy" id="323848"/>
    <lineage>
        <taxon>Bacteria</taxon>
        <taxon>Pseudomonadati</taxon>
        <taxon>Pseudomonadota</taxon>
        <taxon>Betaproteobacteria</taxon>
        <taxon>Nitrosomonadales</taxon>
        <taxon>Nitrosomonadaceae</taxon>
        <taxon>Nitrosospira</taxon>
    </lineage>
</organism>
<reference key="1">
    <citation type="submission" date="2005-08" db="EMBL/GenBank/DDBJ databases">
        <title>Complete sequence of chromosome 1 of Nitrosospira multiformis ATCC 25196.</title>
        <authorList>
            <person name="Copeland A."/>
            <person name="Lucas S."/>
            <person name="Lapidus A."/>
            <person name="Barry K."/>
            <person name="Detter J.C."/>
            <person name="Glavina T."/>
            <person name="Hammon N."/>
            <person name="Israni S."/>
            <person name="Pitluck S."/>
            <person name="Chain P."/>
            <person name="Malfatti S."/>
            <person name="Shin M."/>
            <person name="Vergez L."/>
            <person name="Schmutz J."/>
            <person name="Larimer F."/>
            <person name="Land M."/>
            <person name="Hauser L."/>
            <person name="Kyrpides N."/>
            <person name="Lykidis A."/>
            <person name="Richardson P."/>
        </authorList>
    </citation>
    <scope>NUCLEOTIDE SEQUENCE [LARGE SCALE GENOMIC DNA]</scope>
    <source>
        <strain>ATCC 25196 / NCIMB 11849 / C 71</strain>
    </source>
</reference>
<evidence type="ECO:0000255" key="1">
    <source>
        <dbReference type="HAMAP-Rule" id="MF_02004"/>
    </source>
</evidence>